<feature type="chain" id="PRO_0000271770" description="E3 ubiquitin-protein ligase MARCHF5">
    <location>
        <begin position="1"/>
        <end position="278"/>
    </location>
</feature>
<feature type="transmembrane region" description="Helical" evidence="2">
    <location>
        <begin position="99"/>
        <end position="119"/>
    </location>
</feature>
<feature type="transmembrane region" description="Helical" evidence="2">
    <location>
        <begin position="139"/>
        <end position="159"/>
    </location>
</feature>
<feature type="transmembrane region" description="Helical" evidence="2">
    <location>
        <begin position="209"/>
        <end position="229"/>
    </location>
</feature>
<feature type="transmembrane region" description="Helical" evidence="2">
    <location>
        <begin position="238"/>
        <end position="258"/>
    </location>
</feature>
<feature type="zinc finger region" description="RING-CH-type" evidence="3">
    <location>
        <begin position="6"/>
        <end position="75"/>
    </location>
</feature>
<feature type="binding site" evidence="3">
    <location>
        <position position="14"/>
    </location>
    <ligand>
        <name>Zn(2+)</name>
        <dbReference type="ChEBI" id="CHEBI:29105"/>
        <label>1</label>
    </ligand>
</feature>
<feature type="binding site" evidence="3">
    <location>
        <position position="17"/>
    </location>
    <ligand>
        <name>Zn(2+)</name>
        <dbReference type="ChEBI" id="CHEBI:29105"/>
        <label>1</label>
    </ligand>
</feature>
<feature type="binding site" evidence="3">
    <location>
        <position position="33"/>
    </location>
    <ligand>
        <name>Zn(2+)</name>
        <dbReference type="ChEBI" id="CHEBI:29105"/>
        <label>2</label>
    </ligand>
</feature>
<feature type="binding site" evidence="3">
    <location>
        <position position="35"/>
    </location>
    <ligand>
        <name>Zn(2+)</name>
        <dbReference type="ChEBI" id="CHEBI:29105"/>
        <label>2</label>
    </ligand>
</feature>
<feature type="binding site" evidence="3">
    <location>
        <position position="43"/>
    </location>
    <ligand>
        <name>Zn(2+)</name>
        <dbReference type="ChEBI" id="CHEBI:29105"/>
        <label>1</label>
    </ligand>
</feature>
<feature type="binding site" evidence="3">
    <location>
        <position position="46"/>
    </location>
    <ligand>
        <name>Zn(2+)</name>
        <dbReference type="ChEBI" id="CHEBI:29105"/>
        <label>1</label>
    </ligand>
</feature>
<feature type="binding site" evidence="3">
    <location>
        <position position="65"/>
    </location>
    <ligand>
        <name>Zn(2+)</name>
        <dbReference type="ChEBI" id="CHEBI:29105"/>
        <label>2</label>
    </ligand>
</feature>
<feature type="binding site" evidence="3">
    <location>
        <position position="68"/>
    </location>
    <ligand>
        <name>Zn(2+)</name>
        <dbReference type="ChEBI" id="CHEBI:29105"/>
        <label>2</label>
    </ligand>
</feature>
<feature type="sequence conflict" description="In Ref. 2; AAH64752." evidence="6" ref="2">
    <original>V</original>
    <variation>A</variation>
    <location>
        <position position="85"/>
    </location>
</feature>
<feature type="sequence conflict" description="In Ref. 1; BAB26154." evidence="6" ref="1">
    <original>GGIA</original>
    <variation>VRWI</variation>
    <location>
        <begin position="241"/>
        <end position="244"/>
    </location>
</feature>
<dbReference type="EC" id="2.3.2.27"/>
<dbReference type="EMBL" id="AK003478">
    <property type="protein sequence ID" value="BAB22809.1"/>
    <property type="molecule type" value="mRNA"/>
</dbReference>
<dbReference type="EMBL" id="AK009232">
    <property type="protein sequence ID" value="BAB26154.1"/>
    <property type="molecule type" value="mRNA"/>
</dbReference>
<dbReference type="EMBL" id="BC064752">
    <property type="protein sequence ID" value="AAH64752.1"/>
    <property type="molecule type" value="mRNA"/>
</dbReference>
<dbReference type="EMBL" id="BC107215">
    <property type="protein sequence ID" value="AAI07216.1"/>
    <property type="molecule type" value="mRNA"/>
</dbReference>
<dbReference type="CCDS" id="CCDS29776.1"/>
<dbReference type="RefSeq" id="NP_001157808.1">
    <property type="nucleotide sequence ID" value="NM_001164336.1"/>
</dbReference>
<dbReference type="RefSeq" id="NP_081590.3">
    <property type="nucleotide sequence ID" value="NM_027314.3"/>
</dbReference>
<dbReference type="BioGRID" id="213232">
    <property type="interactions" value="9"/>
</dbReference>
<dbReference type="FunCoup" id="Q3KNM2">
    <property type="interactions" value="3218"/>
</dbReference>
<dbReference type="STRING" id="10090.ENSMUSP00000024078"/>
<dbReference type="iPTMnet" id="Q3KNM2"/>
<dbReference type="PhosphoSitePlus" id="Q3KNM2"/>
<dbReference type="SwissPalm" id="Q3KNM2"/>
<dbReference type="PaxDb" id="10090-ENSMUSP00000024078"/>
<dbReference type="ProteomicsDB" id="252732"/>
<dbReference type="Pumba" id="Q3KNM2"/>
<dbReference type="Antibodypedia" id="30397">
    <property type="antibodies" value="194 antibodies from 27 providers"/>
</dbReference>
<dbReference type="Ensembl" id="ENSMUST00000024078.15">
    <property type="protein sequence ID" value="ENSMUSP00000024078.8"/>
    <property type="gene ID" value="ENSMUSG00000023307.15"/>
</dbReference>
<dbReference type="GeneID" id="69104"/>
<dbReference type="KEGG" id="mmu:69104"/>
<dbReference type="UCSC" id="uc008hif.2">
    <property type="organism name" value="mouse"/>
</dbReference>
<dbReference type="AGR" id="MGI:1915207"/>
<dbReference type="CTD" id="54708"/>
<dbReference type="MGI" id="MGI:1915207">
    <property type="gene designation" value="Marchf5"/>
</dbReference>
<dbReference type="VEuPathDB" id="HostDB:ENSMUSG00000023307"/>
<dbReference type="eggNOG" id="KOG3053">
    <property type="taxonomic scope" value="Eukaryota"/>
</dbReference>
<dbReference type="GeneTree" id="ENSGT00390000009948"/>
<dbReference type="HOGENOM" id="CLU_046472_1_1_1"/>
<dbReference type="InParanoid" id="Q3KNM2"/>
<dbReference type="OMA" id="KRYCWVC"/>
<dbReference type="OrthoDB" id="5817083at2759"/>
<dbReference type="PhylomeDB" id="Q3KNM2"/>
<dbReference type="TreeFam" id="TF316219"/>
<dbReference type="UniPathway" id="UPA00143"/>
<dbReference type="BioGRID-ORCS" id="69104">
    <property type="hits" value="10 hits in 51 CRISPR screens"/>
</dbReference>
<dbReference type="ChiTaRS" id="March5">
    <property type="organism name" value="mouse"/>
</dbReference>
<dbReference type="PRO" id="PR:Q3KNM2"/>
<dbReference type="Proteomes" id="UP000000589">
    <property type="component" value="Chromosome 19"/>
</dbReference>
<dbReference type="RNAct" id="Q3KNM2">
    <property type="molecule type" value="protein"/>
</dbReference>
<dbReference type="Bgee" id="ENSMUSG00000023307">
    <property type="expression patterns" value="Expressed in animal zygote and 79 other cell types or tissues"/>
</dbReference>
<dbReference type="ExpressionAtlas" id="Q3KNM2">
    <property type="expression patterns" value="baseline and differential"/>
</dbReference>
<dbReference type="GO" id="GO:0005783">
    <property type="term" value="C:endoplasmic reticulum"/>
    <property type="evidence" value="ECO:0000250"/>
    <property type="project" value="UniProtKB"/>
</dbReference>
<dbReference type="GO" id="GO:0005789">
    <property type="term" value="C:endoplasmic reticulum membrane"/>
    <property type="evidence" value="ECO:0007669"/>
    <property type="project" value="UniProtKB-SubCell"/>
</dbReference>
<dbReference type="GO" id="GO:0005741">
    <property type="term" value="C:mitochondrial outer membrane"/>
    <property type="evidence" value="ECO:0000250"/>
    <property type="project" value="UniProtKB"/>
</dbReference>
<dbReference type="GO" id="GO:0051020">
    <property type="term" value="F:GTPase binding"/>
    <property type="evidence" value="ECO:0007669"/>
    <property type="project" value="Ensembl"/>
</dbReference>
<dbReference type="GO" id="GO:0061630">
    <property type="term" value="F:ubiquitin protein ligase activity"/>
    <property type="evidence" value="ECO:0000250"/>
    <property type="project" value="UniProtKB"/>
</dbReference>
<dbReference type="GO" id="GO:0008270">
    <property type="term" value="F:zinc ion binding"/>
    <property type="evidence" value="ECO:0007669"/>
    <property type="project" value="UniProtKB-KW"/>
</dbReference>
<dbReference type="GO" id="GO:0039532">
    <property type="term" value="P:negative regulation of cytoplasmic pattern recognition receptor signaling pathway"/>
    <property type="evidence" value="ECO:0007669"/>
    <property type="project" value="Ensembl"/>
</dbReference>
<dbReference type="GO" id="GO:0141111">
    <property type="term" value="P:positive regulation of cGAS/STING signaling pathway"/>
    <property type="evidence" value="ECO:0007669"/>
    <property type="project" value="Ensembl"/>
</dbReference>
<dbReference type="GO" id="GO:0090141">
    <property type="term" value="P:positive regulation of mitochondrial fission"/>
    <property type="evidence" value="ECO:0007669"/>
    <property type="project" value="Ensembl"/>
</dbReference>
<dbReference type="GO" id="GO:1900227">
    <property type="term" value="P:positive regulation of NLRP3 inflammasome complex assembly"/>
    <property type="evidence" value="ECO:0007669"/>
    <property type="project" value="Ensembl"/>
</dbReference>
<dbReference type="GO" id="GO:0051865">
    <property type="term" value="P:protein autoubiquitination"/>
    <property type="evidence" value="ECO:0000250"/>
    <property type="project" value="UniProtKB"/>
</dbReference>
<dbReference type="GO" id="GO:0044314">
    <property type="term" value="P:protein K27-linked ubiquitination"/>
    <property type="evidence" value="ECO:0007669"/>
    <property type="project" value="Ensembl"/>
</dbReference>
<dbReference type="GO" id="GO:0070936">
    <property type="term" value="P:protein K48-linked ubiquitination"/>
    <property type="evidence" value="ECO:0007669"/>
    <property type="project" value="Ensembl"/>
</dbReference>
<dbReference type="GO" id="GO:0070534">
    <property type="term" value="P:protein K63-linked ubiquitination"/>
    <property type="evidence" value="ECO:0007669"/>
    <property type="project" value="Ensembl"/>
</dbReference>
<dbReference type="GO" id="GO:0070585">
    <property type="term" value="P:protein localization to mitochondrion"/>
    <property type="evidence" value="ECO:0007669"/>
    <property type="project" value="Ensembl"/>
</dbReference>
<dbReference type="GO" id="GO:0090140">
    <property type="term" value="P:regulation of mitochondrial fission"/>
    <property type="evidence" value="ECO:0000250"/>
    <property type="project" value="UniProtKB"/>
</dbReference>
<dbReference type="CDD" id="cd16701">
    <property type="entry name" value="RING_CH-C4HC3_MARCH5"/>
    <property type="match status" value="1"/>
</dbReference>
<dbReference type="FunFam" id="3.30.40.10:FF:000262">
    <property type="entry name" value="E3 ubiquitin-protein ligase MARCH5"/>
    <property type="match status" value="1"/>
</dbReference>
<dbReference type="Gene3D" id="3.30.40.10">
    <property type="entry name" value="Zinc/RING finger domain, C3HC4 (zinc finger)"/>
    <property type="match status" value="1"/>
</dbReference>
<dbReference type="InterPro" id="IPR011016">
    <property type="entry name" value="Znf_RING-CH"/>
</dbReference>
<dbReference type="InterPro" id="IPR013083">
    <property type="entry name" value="Znf_RING/FYVE/PHD"/>
</dbReference>
<dbReference type="PANTHER" id="PTHR46283">
    <property type="entry name" value="E3 UBIQUITIN-PROTEIN LIGASE MARCH5"/>
    <property type="match status" value="1"/>
</dbReference>
<dbReference type="Pfam" id="PF12906">
    <property type="entry name" value="RINGv"/>
    <property type="match status" value="1"/>
</dbReference>
<dbReference type="SMART" id="SM00744">
    <property type="entry name" value="RINGv"/>
    <property type="match status" value="1"/>
</dbReference>
<dbReference type="SUPFAM" id="SSF57850">
    <property type="entry name" value="RING/U-box"/>
    <property type="match status" value="1"/>
</dbReference>
<dbReference type="PROSITE" id="PS51292">
    <property type="entry name" value="ZF_RING_CH"/>
    <property type="match status" value="1"/>
</dbReference>
<accession>Q3KNM2</accession>
<accession>Q3KNM3</accession>
<accession>Q6P230</accession>
<accession>Q9CPS3</accession>
<accession>Q9CTI6</accession>
<sequence>MPDQALQQMLDRSCWVCFATDEDDRTAEWVRPCRCRGSTKWVHQACLQRWVDEKQRGNSTARVACPQCNAEYLIVFPKLGPVVYVLDLADRLISKACPFAAAGIMVGSIYWTAVTYGAVTVMQVVGHKEGLDVMERADPLFLLIGLPTIPVMLILGKMIRWEDYVLRLWRKYSNKLQILNSIFPGIGCPVPRIPAEANPLADHVSATRILCGALVFPTIATIVGKLMFSSVNSNLQRTILGGIAFVAIKGAFKVYFKQQQYLRQAHRKILNYPEQEEA</sequence>
<reference key="1">
    <citation type="journal article" date="2005" name="Science">
        <title>The transcriptional landscape of the mammalian genome.</title>
        <authorList>
            <person name="Carninci P."/>
            <person name="Kasukawa T."/>
            <person name="Katayama S."/>
            <person name="Gough J."/>
            <person name="Frith M.C."/>
            <person name="Maeda N."/>
            <person name="Oyama R."/>
            <person name="Ravasi T."/>
            <person name="Lenhard B."/>
            <person name="Wells C."/>
            <person name="Kodzius R."/>
            <person name="Shimokawa K."/>
            <person name="Bajic V.B."/>
            <person name="Brenner S.E."/>
            <person name="Batalov S."/>
            <person name="Forrest A.R."/>
            <person name="Zavolan M."/>
            <person name="Davis M.J."/>
            <person name="Wilming L.G."/>
            <person name="Aidinis V."/>
            <person name="Allen J.E."/>
            <person name="Ambesi-Impiombato A."/>
            <person name="Apweiler R."/>
            <person name="Aturaliya R.N."/>
            <person name="Bailey T.L."/>
            <person name="Bansal M."/>
            <person name="Baxter L."/>
            <person name="Beisel K.W."/>
            <person name="Bersano T."/>
            <person name="Bono H."/>
            <person name="Chalk A.M."/>
            <person name="Chiu K.P."/>
            <person name="Choudhary V."/>
            <person name="Christoffels A."/>
            <person name="Clutterbuck D.R."/>
            <person name="Crowe M.L."/>
            <person name="Dalla E."/>
            <person name="Dalrymple B.P."/>
            <person name="de Bono B."/>
            <person name="Della Gatta G."/>
            <person name="di Bernardo D."/>
            <person name="Down T."/>
            <person name="Engstrom P."/>
            <person name="Fagiolini M."/>
            <person name="Faulkner G."/>
            <person name="Fletcher C.F."/>
            <person name="Fukushima T."/>
            <person name="Furuno M."/>
            <person name="Futaki S."/>
            <person name="Gariboldi M."/>
            <person name="Georgii-Hemming P."/>
            <person name="Gingeras T.R."/>
            <person name="Gojobori T."/>
            <person name="Green R.E."/>
            <person name="Gustincich S."/>
            <person name="Harbers M."/>
            <person name="Hayashi Y."/>
            <person name="Hensch T.K."/>
            <person name="Hirokawa N."/>
            <person name="Hill D."/>
            <person name="Huminiecki L."/>
            <person name="Iacono M."/>
            <person name="Ikeo K."/>
            <person name="Iwama A."/>
            <person name="Ishikawa T."/>
            <person name="Jakt M."/>
            <person name="Kanapin A."/>
            <person name="Katoh M."/>
            <person name="Kawasawa Y."/>
            <person name="Kelso J."/>
            <person name="Kitamura H."/>
            <person name="Kitano H."/>
            <person name="Kollias G."/>
            <person name="Krishnan S.P."/>
            <person name="Kruger A."/>
            <person name="Kummerfeld S.K."/>
            <person name="Kurochkin I.V."/>
            <person name="Lareau L.F."/>
            <person name="Lazarevic D."/>
            <person name="Lipovich L."/>
            <person name="Liu J."/>
            <person name="Liuni S."/>
            <person name="McWilliam S."/>
            <person name="Madan Babu M."/>
            <person name="Madera M."/>
            <person name="Marchionni L."/>
            <person name="Matsuda H."/>
            <person name="Matsuzawa S."/>
            <person name="Miki H."/>
            <person name="Mignone F."/>
            <person name="Miyake S."/>
            <person name="Morris K."/>
            <person name="Mottagui-Tabar S."/>
            <person name="Mulder N."/>
            <person name="Nakano N."/>
            <person name="Nakauchi H."/>
            <person name="Ng P."/>
            <person name="Nilsson R."/>
            <person name="Nishiguchi S."/>
            <person name="Nishikawa S."/>
            <person name="Nori F."/>
            <person name="Ohara O."/>
            <person name="Okazaki Y."/>
            <person name="Orlando V."/>
            <person name="Pang K.C."/>
            <person name="Pavan W.J."/>
            <person name="Pavesi G."/>
            <person name="Pesole G."/>
            <person name="Petrovsky N."/>
            <person name="Piazza S."/>
            <person name="Reed J."/>
            <person name="Reid J.F."/>
            <person name="Ring B.Z."/>
            <person name="Ringwald M."/>
            <person name="Rost B."/>
            <person name="Ruan Y."/>
            <person name="Salzberg S.L."/>
            <person name="Sandelin A."/>
            <person name="Schneider C."/>
            <person name="Schoenbach C."/>
            <person name="Sekiguchi K."/>
            <person name="Semple C.A."/>
            <person name="Seno S."/>
            <person name="Sessa L."/>
            <person name="Sheng Y."/>
            <person name="Shibata Y."/>
            <person name="Shimada H."/>
            <person name="Shimada K."/>
            <person name="Silva D."/>
            <person name="Sinclair B."/>
            <person name="Sperling S."/>
            <person name="Stupka E."/>
            <person name="Sugiura K."/>
            <person name="Sultana R."/>
            <person name="Takenaka Y."/>
            <person name="Taki K."/>
            <person name="Tammoja K."/>
            <person name="Tan S.L."/>
            <person name="Tang S."/>
            <person name="Taylor M.S."/>
            <person name="Tegner J."/>
            <person name="Teichmann S.A."/>
            <person name="Ueda H.R."/>
            <person name="van Nimwegen E."/>
            <person name="Verardo R."/>
            <person name="Wei C.L."/>
            <person name="Yagi K."/>
            <person name="Yamanishi H."/>
            <person name="Zabarovsky E."/>
            <person name="Zhu S."/>
            <person name="Zimmer A."/>
            <person name="Hide W."/>
            <person name="Bult C."/>
            <person name="Grimmond S.M."/>
            <person name="Teasdale R.D."/>
            <person name="Liu E.T."/>
            <person name="Brusic V."/>
            <person name="Quackenbush J."/>
            <person name="Wahlestedt C."/>
            <person name="Mattick J.S."/>
            <person name="Hume D.A."/>
            <person name="Kai C."/>
            <person name="Sasaki D."/>
            <person name="Tomaru Y."/>
            <person name="Fukuda S."/>
            <person name="Kanamori-Katayama M."/>
            <person name="Suzuki M."/>
            <person name="Aoki J."/>
            <person name="Arakawa T."/>
            <person name="Iida J."/>
            <person name="Imamura K."/>
            <person name="Itoh M."/>
            <person name="Kato T."/>
            <person name="Kawaji H."/>
            <person name="Kawagashira N."/>
            <person name="Kawashima T."/>
            <person name="Kojima M."/>
            <person name="Kondo S."/>
            <person name="Konno H."/>
            <person name="Nakano K."/>
            <person name="Ninomiya N."/>
            <person name="Nishio T."/>
            <person name="Okada M."/>
            <person name="Plessy C."/>
            <person name="Shibata K."/>
            <person name="Shiraki T."/>
            <person name="Suzuki S."/>
            <person name="Tagami M."/>
            <person name="Waki K."/>
            <person name="Watahiki A."/>
            <person name="Okamura-Oho Y."/>
            <person name="Suzuki H."/>
            <person name="Kawai J."/>
            <person name="Hayashizaki Y."/>
        </authorList>
    </citation>
    <scope>NUCLEOTIDE SEQUENCE [LARGE SCALE MRNA]</scope>
    <source>
        <strain>C57BL/6J</strain>
        <tissue>Tongue</tissue>
    </source>
</reference>
<reference key="2">
    <citation type="journal article" date="2004" name="Genome Res.">
        <title>The status, quality, and expansion of the NIH full-length cDNA project: the Mammalian Gene Collection (MGC).</title>
        <authorList>
            <consortium name="The MGC Project Team"/>
        </authorList>
    </citation>
    <scope>NUCLEOTIDE SEQUENCE [LARGE SCALE MRNA]</scope>
    <source>
        <strain>C57BL/6J</strain>
        <tissue>Egg</tissue>
    </source>
</reference>
<reference key="3">
    <citation type="journal article" date="2010" name="Cell">
        <title>A tissue-specific atlas of mouse protein phosphorylation and expression.</title>
        <authorList>
            <person name="Huttlin E.L."/>
            <person name="Jedrychowski M.P."/>
            <person name="Elias J.E."/>
            <person name="Goswami T."/>
            <person name="Rad R."/>
            <person name="Beausoleil S.A."/>
            <person name="Villen J."/>
            <person name="Haas W."/>
            <person name="Sowa M.E."/>
            <person name="Gygi S.P."/>
        </authorList>
    </citation>
    <scope>IDENTIFICATION BY MASS SPECTROMETRY [LARGE SCALE ANALYSIS]</scope>
    <source>
        <tissue>Brain</tissue>
        <tissue>Brown adipose tissue</tissue>
        <tissue>Heart</tissue>
        <tissue>Kidney</tissue>
        <tissue>Liver</tissue>
        <tissue>Lung</tissue>
        <tissue>Pancreas</tissue>
        <tissue>Spleen</tissue>
        <tissue>Testis</tissue>
    </source>
</reference>
<reference key="4">
    <citation type="journal article" date="2023" name="Cell Death Differ.">
        <title>MARCH5 regulates mitotic apoptosis through MCL1-dependent and independent mechanisms.</title>
        <authorList>
            <person name="Wang Y."/>
            <person name="Poon R.Y.C."/>
        </authorList>
    </citation>
    <scope>FUNCTION</scope>
</reference>
<reference key="5">
    <citation type="journal article" date="2023" name="EMBO J.">
        <title>MARCH5-dependent NLRP3 ubiquitination is required for mitochondrial NLRP3-NEK7 complex formation and NLRP3 inflammasome activation.</title>
        <authorList>
            <person name="Park Y.J."/>
            <person name="Dodantenna N."/>
            <person name="Kim Y."/>
            <person name="Kim T.H."/>
            <person name="Lee H.S."/>
            <person name="Yoo Y.S."/>
            <person name="Heo J."/>
            <person name="Lee J.H."/>
            <person name="Kwon M.H."/>
            <person name="Kang H.C."/>
            <person name="Lee J.S."/>
            <person name="Cho H."/>
        </authorList>
    </citation>
    <scope>FUNCTION</scope>
    <scope>DISRUPTION PHENOTYPE</scope>
</reference>
<name>MARH5_MOUSE</name>
<gene>
    <name type="primary">Marchf5</name>
    <name type="synonym">March5</name>
</gene>
<comment type="function">
    <text evidence="1 4 5">Mitochondrial E3 ubiquitin-protein ligase that plays a crucial role in the control of mitochondrial morphology by acting as a positive regulator of mitochondrial fission and as an important regulator of immune response. Plays a crucial role in maintaining mitochondrial homeostasis by regulating the dynamics of mitochondria through the ubiquitination of key proteins involved in fission and fusion such as FIS1, DNM1L and MFN1 (By similarity). Acts as a critical determinant of mitotic apoptosis through both MCL1-dependent and -independent pathways (PubMed:36329234). Turns off persistent immune signaling by degrading oligomeric complexes of retinoic acid-inducible gene I/DDX58 and mitochondrial antiviral-signaling protein/MAVS formed upon RNA virus infection. Promotes STING-mediated type-I interferon production via 'Lys-63'-linked ubiquitination of STING1 thereby preserving its activity and preventing the formation of inactive STING1 polymers. Plays also an essential role in the formation of PEX3-containing vesicles in the de novo biogenesis of peroxisomes from mitochondria. Acts as a regulator of NLRP3 inflammasome activation on the mitochondria by mediating the 'Lys-27'-linked polyubiquitination of NLRP3, positively regulating the NLRP3-NEK7 complex formation and NLRP3 oligomerization (PubMed:37575012).</text>
</comment>
<comment type="catalytic activity">
    <reaction evidence="1">
        <text>S-ubiquitinyl-[E2 ubiquitin-conjugating enzyme]-L-cysteine + [acceptor protein]-L-lysine = [E2 ubiquitin-conjugating enzyme]-L-cysteine + N(6)-ubiquitinyl-[acceptor protein]-L-lysine.</text>
        <dbReference type="EC" id="2.3.2.27"/>
    </reaction>
</comment>
<comment type="pathway">
    <text>Protein modification; protein ubiquitination.</text>
</comment>
<comment type="subunit">
    <text evidence="1">Monomer and homodimer. Interacts with MFN1, MFN2, DNM1L and FIS1.</text>
</comment>
<comment type="subcellular location">
    <subcellularLocation>
        <location evidence="1">Mitochondrion outer membrane</location>
        <topology evidence="2">Multi-pass membrane protein</topology>
    </subcellularLocation>
    <subcellularLocation>
        <location evidence="1">Endoplasmic reticulum membrane</location>
        <topology evidence="2">Multi-pass membrane protein</topology>
    </subcellularLocation>
</comment>
<comment type="domain">
    <text evidence="3">The RING-CH-type zinc finger domain is required for E3 ligase activity.</text>
</comment>
<comment type="PTM">
    <text evidence="1">Autoubiquitinated leading to degradation.</text>
</comment>
<comment type="disruption phenotype">
    <text evidence="5">Myeloid cell-specific Marchf5 conditional knockout mice exhibit an attenuated mortality rate and inflammatory response to septic shock.</text>
</comment>
<keyword id="KW-0256">Endoplasmic reticulum</keyword>
<keyword id="KW-0472">Membrane</keyword>
<keyword id="KW-0479">Metal-binding</keyword>
<keyword id="KW-0496">Mitochondrion</keyword>
<keyword id="KW-1000">Mitochondrion outer membrane</keyword>
<keyword id="KW-1185">Reference proteome</keyword>
<keyword id="KW-0808">Transferase</keyword>
<keyword id="KW-0812">Transmembrane</keyword>
<keyword id="KW-1133">Transmembrane helix</keyword>
<keyword id="KW-0832">Ubl conjugation</keyword>
<keyword id="KW-0833">Ubl conjugation pathway</keyword>
<keyword id="KW-0862">Zinc</keyword>
<keyword id="KW-0863">Zinc-finger</keyword>
<evidence type="ECO:0000250" key="1">
    <source>
        <dbReference type="UniProtKB" id="Q9NX47"/>
    </source>
</evidence>
<evidence type="ECO:0000255" key="2"/>
<evidence type="ECO:0000255" key="3">
    <source>
        <dbReference type="PROSITE-ProRule" id="PRU00623"/>
    </source>
</evidence>
<evidence type="ECO:0000269" key="4">
    <source>
    </source>
</evidence>
<evidence type="ECO:0000269" key="5">
    <source>
    </source>
</evidence>
<evidence type="ECO:0000305" key="6"/>
<proteinExistence type="evidence at protein level"/>
<organism>
    <name type="scientific">Mus musculus</name>
    <name type="common">Mouse</name>
    <dbReference type="NCBI Taxonomy" id="10090"/>
    <lineage>
        <taxon>Eukaryota</taxon>
        <taxon>Metazoa</taxon>
        <taxon>Chordata</taxon>
        <taxon>Craniata</taxon>
        <taxon>Vertebrata</taxon>
        <taxon>Euteleostomi</taxon>
        <taxon>Mammalia</taxon>
        <taxon>Eutheria</taxon>
        <taxon>Euarchontoglires</taxon>
        <taxon>Glires</taxon>
        <taxon>Rodentia</taxon>
        <taxon>Myomorpha</taxon>
        <taxon>Muroidea</taxon>
        <taxon>Muridae</taxon>
        <taxon>Murinae</taxon>
        <taxon>Mus</taxon>
        <taxon>Mus</taxon>
    </lineage>
</organism>
<protein>
    <recommendedName>
        <fullName>E3 ubiquitin-protein ligase MARCHF5</fullName>
        <ecNumber>2.3.2.27</ecNumber>
    </recommendedName>
    <alternativeName>
        <fullName>Membrane-associated RING finger protein 5</fullName>
    </alternativeName>
    <alternativeName>
        <fullName>Membrane-associated RING-CH protein V</fullName>
        <shortName>MARCH-V</shortName>
    </alternativeName>
    <alternativeName>
        <fullName evidence="6">RING-type E3 ubiquitin transferase MARCHF5</fullName>
    </alternativeName>
</protein>